<organism>
    <name type="scientific">Serratia marcescens</name>
    <dbReference type="NCBI Taxonomy" id="615"/>
    <lineage>
        <taxon>Bacteria</taxon>
        <taxon>Pseudomonadati</taxon>
        <taxon>Pseudomonadota</taxon>
        <taxon>Gammaproteobacteria</taxon>
        <taxon>Enterobacterales</taxon>
        <taxon>Yersiniaceae</taxon>
        <taxon>Serratia</taxon>
    </lineage>
</organism>
<accession>P07254</accession>
<accession>Q54275</accession>
<reference key="1">
    <citation type="submission" date="1993-01" db="EMBL/GenBank/DDBJ databases">
        <authorList>
            <person name="Koo J.C."/>
            <person name="Lim C.O."/>
            <person name="Choi Y.J."/>
            <person name="Kim C.Y."/>
            <person name="Bahk J.D."/>
            <person name="Lee S.Y."/>
            <person name="Cho M.J."/>
        </authorList>
    </citation>
    <scope>NUCLEOTIDE SEQUENCE [GENOMIC DNA]</scope>
</reference>
<reference key="2">
    <citation type="journal article" date="1986" name="EMBO J.">
        <title>Isolation and characterization of genes encoding two chitinase enzymes from Serratia marcescens.</title>
        <authorList>
            <person name="Jones J.D.G."/>
            <person name="Grady K.L."/>
            <person name="Suslow T.V."/>
            <person name="Bedbrook J.R."/>
        </authorList>
    </citation>
    <scope>NUCLEOTIDE SEQUENCE [GENOMIC DNA]</scope>
    <source>
        <strain>ATCC 990 / QMB1466</strain>
    </source>
</reference>
<reference key="3">
    <citation type="journal article" date="1994" name="FEMS Microbiol. Lett.">
        <title>Characterization of a chitinase gene (chiA) from Serratia marcescens BJL200 and one-step purification of the gene product.</title>
        <authorList>
            <person name="Brurberg M.B."/>
            <person name="Eijsink V.G.H."/>
            <person name="Nes I.F."/>
        </authorList>
    </citation>
    <scope>NUCLEOTIDE SEQUENCE [GENOMIC DNA]</scope>
    <scope>PROTEIN SEQUENCE OF 24-31</scope>
    <source>
        <strain>BJL200</strain>
    </source>
</reference>
<reference key="4">
    <citation type="journal article" date="1994" name="Structure">
        <title>Crystal structure of a bacterial chitinase at 2.3-A resolution.</title>
        <authorList>
            <person name="Perrakis A."/>
            <person name="Tews I."/>
            <person name="Dauter Z."/>
            <person name="Oppenheim A.B."/>
            <person name="Chet I."/>
            <person name="Wilson K.S."/>
            <person name="Vorgias C.E."/>
        </authorList>
    </citation>
    <scope>X-RAY CRYSTALLOGRAPHY (2.3 ANGSTROMS)</scope>
    <scope>SEQUENCE REVISION</scope>
</reference>
<evidence type="ECO:0000255" key="1">
    <source>
        <dbReference type="PROSITE-ProRule" id="PRU01258"/>
    </source>
</evidence>
<evidence type="ECO:0000269" key="2">
    <source>
    </source>
</evidence>
<evidence type="ECO:0000305" key="3"/>
<evidence type="ECO:0007829" key="4">
    <source>
        <dbReference type="PDB" id="1CTN"/>
    </source>
</evidence>
<evidence type="ECO:0007829" key="5">
    <source>
        <dbReference type="PDB" id="1EHN"/>
    </source>
</evidence>
<evidence type="ECO:0007829" key="6">
    <source>
        <dbReference type="PDB" id="1EIB"/>
    </source>
</evidence>
<evidence type="ECO:0007829" key="7">
    <source>
        <dbReference type="PDB" id="5Z7N"/>
    </source>
</evidence>
<proteinExistence type="evidence at protein level"/>
<feature type="signal peptide" evidence="2">
    <location>
        <begin position="1"/>
        <end position="23"/>
    </location>
</feature>
<feature type="chain" id="PRO_0000011908" description="Chitinase A">
    <location>
        <begin position="24"/>
        <end position="563"/>
    </location>
</feature>
<feature type="domain" description="GH18" evidence="1">
    <location>
        <begin position="158"/>
        <end position="559"/>
    </location>
</feature>
<feature type="active site" description="Proton donor" evidence="1">
    <location>
        <position position="315"/>
    </location>
</feature>
<feature type="sequence conflict" description="In Ref. 3; CAA85291." evidence="3" ref="3">
    <original>N</original>
    <variation>S</variation>
    <location>
        <position position="52"/>
    </location>
</feature>
<feature type="sequence conflict" description="In Ref. 3; CAA85291." evidence="3" ref="3">
    <original>A</original>
    <variation>T</variation>
    <location>
        <position position="73"/>
    </location>
</feature>
<feature type="sequence conflict" description="In Ref. 2; CAA27292." evidence="3" ref="2">
    <original>TA</original>
    <variation>GP</variation>
    <location>
        <begin position="76"/>
        <end position="77"/>
    </location>
</feature>
<feature type="sequence conflict" description="In Ref. 3; CAA85291." evidence="3" ref="3">
    <original>I</original>
    <variation>V</variation>
    <location>
        <position position="79"/>
    </location>
</feature>
<feature type="sequence conflict" description="In Ref. 3; CAA85291." evidence="3" ref="3">
    <original>T</original>
    <variation>S</variation>
    <location>
        <position position="121"/>
    </location>
</feature>
<feature type="sequence conflict" description="In Ref. 2; CAA27292." evidence="3" ref="2">
    <original>A</original>
    <variation>P</variation>
    <location>
        <position position="139"/>
    </location>
</feature>
<feature type="sequence conflict" description="In Ref. 2; CAA27292." evidence="3" ref="2">
    <original>V</original>
    <variation>I</variation>
    <location>
        <position position="226"/>
    </location>
</feature>
<feature type="sequence conflict" description="In Ref. 1, 2 and 3." evidence="3" ref="1 2 3">
    <original>P</original>
    <variation>A</variation>
    <location>
        <position position="395"/>
    </location>
</feature>
<feature type="sequence conflict" description="In Ref. 1 and 2." evidence="3" ref="1 2">
    <original>PAWKPDTAYTTVNGVNALLA</original>
    <variation>RPGSRHRLHHGERRQCAAG</variation>
    <location>
        <begin position="410"/>
        <end position="429"/>
    </location>
</feature>
<feature type="sequence conflict" description="In Ref. 2 and 3." evidence="3" ref="2 3">
    <original>V</original>
    <variation>I</variation>
    <location>
        <position position="437"/>
    </location>
</feature>
<feature type="sequence conflict" description="In Ref. 2; CAA27292." evidence="3" ref="2">
    <original>ATGP</original>
    <variation>HRA</variation>
    <location>
        <begin position="464"/>
        <end position="467"/>
    </location>
</feature>
<feature type="sequence conflict" description="In Ref. 2 and 3." evidence="3" ref="2 3">
    <original>K</original>
    <variation>E</variation>
    <location>
        <position position="473"/>
    </location>
</feature>
<feature type="sequence conflict" description="In Ref. 2; CAA27292." evidence="3" ref="2">
    <original>G</original>
    <variation>S</variation>
    <location>
        <position position="484"/>
    </location>
</feature>
<feature type="strand" evidence="7">
    <location>
        <begin position="37"/>
        <end position="43"/>
    </location>
</feature>
<feature type="helix" evidence="7">
    <location>
        <begin position="50"/>
        <end position="53"/>
    </location>
</feature>
<feature type="strand" evidence="7">
    <location>
        <begin position="54"/>
        <end position="56"/>
    </location>
</feature>
<feature type="strand" evidence="7">
    <location>
        <begin position="58"/>
        <end position="67"/>
    </location>
</feature>
<feature type="strand" evidence="6">
    <location>
        <begin position="69"/>
        <end position="71"/>
    </location>
</feature>
<feature type="strand" evidence="7">
    <location>
        <begin position="75"/>
        <end position="81"/>
    </location>
</feature>
<feature type="strand" evidence="7">
    <location>
        <begin position="84"/>
        <end position="90"/>
    </location>
</feature>
<feature type="strand" evidence="7">
    <location>
        <begin position="93"/>
        <end position="102"/>
    </location>
</feature>
<feature type="strand" evidence="7">
    <location>
        <begin position="106"/>
        <end position="116"/>
    </location>
</feature>
<feature type="strand" evidence="7">
    <location>
        <begin position="119"/>
        <end position="122"/>
    </location>
</feature>
<feature type="strand" evidence="7">
    <location>
        <begin position="126"/>
        <end position="131"/>
    </location>
</feature>
<feature type="strand" evidence="7">
    <location>
        <begin position="159"/>
        <end position="165"/>
    </location>
</feature>
<feature type="helix" evidence="7">
    <location>
        <begin position="166"/>
        <end position="169"/>
    </location>
</feature>
<feature type="strand" evidence="4">
    <location>
        <begin position="170"/>
        <end position="172"/>
    </location>
</feature>
<feature type="helix" evidence="7">
    <location>
        <begin position="176"/>
        <end position="178"/>
    </location>
</feature>
<feature type="helix" evidence="7">
    <location>
        <begin position="181"/>
        <end position="183"/>
    </location>
</feature>
<feature type="strand" evidence="7">
    <location>
        <begin position="185"/>
        <end position="192"/>
    </location>
</feature>
<feature type="turn" evidence="7">
    <location>
        <begin position="198"/>
        <end position="200"/>
    </location>
</feature>
<feature type="helix" evidence="7">
    <location>
        <begin position="202"/>
        <end position="206"/>
    </location>
</feature>
<feature type="helix" evidence="7">
    <location>
        <begin position="210"/>
        <end position="217"/>
    </location>
</feature>
<feature type="turn" evidence="7">
    <location>
        <begin position="218"/>
        <end position="220"/>
    </location>
</feature>
<feature type="helix" evidence="7">
    <location>
        <begin position="231"/>
        <end position="235"/>
    </location>
</feature>
<feature type="helix" evidence="7">
    <location>
        <begin position="251"/>
        <end position="262"/>
    </location>
</feature>
<feature type="strand" evidence="7">
    <location>
        <begin position="267"/>
        <end position="273"/>
    </location>
</feature>
<feature type="turn" evidence="7">
    <location>
        <begin position="275"/>
        <end position="277"/>
    </location>
</feature>
<feature type="helix" evidence="7">
    <location>
        <begin position="279"/>
        <end position="283"/>
    </location>
</feature>
<feature type="helix" evidence="7">
    <location>
        <begin position="287"/>
        <end position="303"/>
    </location>
</feature>
<feature type="strand" evidence="7">
    <location>
        <begin position="309"/>
        <end position="313"/>
    </location>
</feature>
<feature type="helix" evidence="7">
    <location>
        <begin position="331"/>
        <end position="353"/>
    </location>
</feature>
<feature type="strand" evidence="7">
    <location>
        <begin position="358"/>
        <end position="364"/>
    </location>
</feature>
<feature type="helix" evidence="7">
    <location>
        <begin position="367"/>
        <end position="370"/>
    </location>
</feature>
<feature type="helix" evidence="7">
    <location>
        <begin position="375"/>
        <end position="378"/>
    </location>
</feature>
<feature type="helix" evidence="7">
    <location>
        <begin position="379"/>
        <end position="381"/>
    </location>
</feature>
<feature type="strand" evidence="7">
    <location>
        <begin position="383"/>
        <end position="388"/>
    </location>
</feature>
<feature type="strand" evidence="5">
    <location>
        <begin position="392"/>
        <end position="394"/>
    </location>
</feature>
<feature type="strand" evidence="7">
    <location>
        <begin position="398"/>
        <end position="400"/>
    </location>
</feature>
<feature type="helix" evidence="7">
    <location>
        <begin position="420"/>
        <end position="430"/>
    </location>
</feature>
<feature type="helix" evidence="7">
    <location>
        <begin position="434"/>
        <end position="436"/>
    </location>
</feature>
<feature type="strand" evidence="7">
    <location>
        <begin position="437"/>
        <end position="441"/>
    </location>
</feature>
<feature type="strand" evidence="7">
    <location>
        <begin position="443"/>
        <end position="450"/>
    </location>
</feature>
<feature type="helix" evidence="7">
    <location>
        <begin position="459"/>
        <end position="461"/>
    </location>
</feature>
<feature type="strand" evidence="7">
    <location>
        <begin position="465"/>
        <end position="467"/>
    </location>
</feature>
<feature type="strand" evidence="7">
    <location>
        <begin position="471"/>
        <end position="473"/>
    </location>
</feature>
<feature type="strand" evidence="7">
    <location>
        <begin position="476"/>
        <end position="478"/>
    </location>
</feature>
<feature type="helix" evidence="7">
    <location>
        <begin position="479"/>
        <end position="485"/>
    </location>
</feature>
<feature type="strand" evidence="7">
    <location>
        <begin position="486"/>
        <end position="488"/>
    </location>
</feature>
<feature type="strand" evidence="7">
    <location>
        <begin position="492"/>
        <end position="496"/>
    </location>
</feature>
<feature type="turn" evidence="7">
    <location>
        <begin position="497"/>
        <end position="500"/>
    </location>
</feature>
<feature type="strand" evidence="7">
    <location>
        <begin position="501"/>
        <end position="506"/>
    </location>
</feature>
<feature type="turn" evidence="7">
    <location>
        <begin position="507"/>
        <end position="510"/>
    </location>
</feature>
<feature type="strand" evidence="7">
    <location>
        <begin position="511"/>
        <end position="514"/>
    </location>
</feature>
<feature type="helix" evidence="7">
    <location>
        <begin position="518"/>
        <end position="531"/>
    </location>
</feature>
<feature type="strand" evidence="7">
    <location>
        <begin position="535"/>
        <end position="539"/>
    </location>
</feature>
<feature type="helix" evidence="7">
    <location>
        <begin position="541"/>
        <end position="543"/>
    </location>
</feature>
<feature type="helix" evidence="7">
    <location>
        <begin position="547"/>
        <end position="555"/>
    </location>
</feature>
<protein>
    <recommendedName>
        <fullName>Chitinase A</fullName>
        <ecNumber>3.2.1.14</ecNumber>
    </recommendedName>
</protein>
<dbReference type="EC" id="3.2.1.14"/>
<dbReference type="EMBL" id="L01455">
    <property type="protein sequence ID" value="AAA26551.1"/>
    <property type="molecule type" value="Genomic_DNA"/>
</dbReference>
<dbReference type="EMBL" id="X03657">
    <property type="protein sequence ID" value="CAA27292.1"/>
    <property type="molecule type" value="Genomic_DNA"/>
</dbReference>
<dbReference type="EMBL" id="Z36294">
    <property type="protein sequence ID" value="CAA85291.1"/>
    <property type="molecule type" value="Genomic_DNA"/>
</dbReference>
<dbReference type="PIR" id="A25090">
    <property type="entry name" value="A25090"/>
</dbReference>
<dbReference type="PIR" id="S60651">
    <property type="entry name" value="S60651"/>
</dbReference>
<dbReference type="RefSeq" id="WP_021504113.1">
    <property type="nucleotide sequence ID" value="NZ_VKVH01000016.1"/>
</dbReference>
<dbReference type="PDB" id="1CTN">
    <property type="method" value="X-ray"/>
    <property type="resolution" value="2.30 A"/>
    <property type="chains" value="A=24-563"/>
</dbReference>
<dbReference type="PDB" id="1EHN">
    <property type="method" value="X-ray"/>
    <property type="resolution" value="1.90 A"/>
    <property type="chains" value="A=24-563"/>
</dbReference>
<dbReference type="PDB" id="1EIB">
    <property type="method" value="X-ray"/>
    <property type="resolution" value="1.80 A"/>
    <property type="chains" value="A=24-563"/>
</dbReference>
<dbReference type="PDB" id="1FFQ">
    <property type="method" value="X-ray"/>
    <property type="resolution" value="1.90 A"/>
    <property type="chains" value="A=24-563"/>
</dbReference>
<dbReference type="PDB" id="1FFR">
    <property type="method" value="X-ray"/>
    <property type="resolution" value="1.80 A"/>
    <property type="chains" value="A=24-563"/>
</dbReference>
<dbReference type="PDB" id="1K9T">
    <property type="method" value="X-ray"/>
    <property type="resolution" value="1.80 A"/>
    <property type="chains" value="A=24-563"/>
</dbReference>
<dbReference type="PDB" id="1NH6">
    <property type="method" value="X-ray"/>
    <property type="resolution" value="2.05 A"/>
    <property type="chains" value="A=24-563"/>
</dbReference>
<dbReference type="PDB" id="1RD6">
    <property type="method" value="X-ray"/>
    <property type="resolution" value="2.60 A"/>
    <property type="chains" value="A=1-563"/>
</dbReference>
<dbReference type="PDB" id="1X6L">
    <property type="method" value="X-ray"/>
    <property type="resolution" value="1.90 A"/>
    <property type="chains" value="A=1-563"/>
</dbReference>
<dbReference type="PDB" id="1X6N">
    <property type="method" value="X-ray"/>
    <property type="resolution" value="2.00 A"/>
    <property type="chains" value="A=1-563"/>
</dbReference>
<dbReference type="PDB" id="2WK2">
    <property type="method" value="X-ray"/>
    <property type="resolution" value="2.05 A"/>
    <property type="chains" value="A=24-563"/>
</dbReference>
<dbReference type="PDB" id="2WLY">
    <property type="method" value="X-ray"/>
    <property type="resolution" value="2.40 A"/>
    <property type="chains" value="A=24-563"/>
</dbReference>
<dbReference type="PDB" id="2WLZ">
    <property type="method" value="X-ray"/>
    <property type="resolution" value="1.82 A"/>
    <property type="chains" value="A=24-563"/>
</dbReference>
<dbReference type="PDB" id="2WM0">
    <property type="method" value="X-ray"/>
    <property type="resolution" value="1.90 A"/>
    <property type="chains" value="A=24-563"/>
</dbReference>
<dbReference type="PDB" id="5Z7M">
    <property type="method" value="X-ray"/>
    <property type="resolution" value="2.00 A"/>
    <property type="chains" value="A=24-563"/>
</dbReference>
<dbReference type="PDB" id="5Z7N">
    <property type="method" value="X-ray"/>
    <property type="resolution" value="1.70 A"/>
    <property type="chains" value="A=24-563"/>
</dbReference>
<dbReference type="PDB" id="5Z7O">
    <property type="method" value="X-ray"/>
    <property type="resolution" value="2.00 A"/>
    <property type="chains" value="A=24-563"/>
</dbReference>
<dbReference type="PDB" id="5Z7P">
    <property type="method" value="X-ray"/>
    <property type="resolution" value="2.00 A"/>
    <property type="chains" value="A=24-563"/>
</dbReference>
<dbReference type="PDB" id="7FD6">
    <property type="method" value="X-ray"/>
    <property type="resolution" value="1.79 A"/>
    <property type="chains" value="A=24-563"/>
</dbReference>
<dbReference type="PDBsum" id="1CTN"/>
<dbReference type="PDBsum" id="1EHN"/>
<dbReference type="PDBsum" id="1EIB"/>
<dbReference type="PDBsum" id="1FFQ"/>
<dbReference type="PDBsum" id="1FFR"/>
<dbReference type="PDBsum" id="1K9T"/>
<dbReference type="PDBsum" id="1NH6"/>
<dbReference type="PDBsum" id="1RD6"/>
<dbReference type="PDBsum" id="1X6L"/>
<dbReference type="PDBsum" id="1X6N"/>
<dbReference type="PDBsum" id="2WK2"/>
<dbReference type="PDBsum" id="2WLY"/>
<dbReference type="PDBsum" id="2WLZ"/>
<dbReference type="PDBsum" id="2WM0"/>
<dbReference type="PDBsum" id="5Z7M"/>
<dbReference type="PDBsum" id="5Z7N"/>
<dbReference type="PDBsum" id="5Z7O"/>
<dbReference type="PDBsum" id="5Z7P"/>
<dbReference type="PDBsum" id="7FD6"/>
<dbReference type="SMR" id="P07254"/>
<dbReference type="STRING" id="273526.SMDB11_4243"/>
<dbReference type="BindingDB" id="P07254"/>
<dbReference type="ChEMBL" id="CHEMBL5423"/>
<dbReference type="DrugBank" id="DB03109">
    <property type="generic name" value="2-acetylamino-2-deoxy-b-D-allopyranose"/>
</dbReference>
<dbReference type="DrugBank" id="DB04628">
    <property type="generic name" value="Allosamidin"/>
</dbReference>
<dbReference type="DrugBank" id="DB04404">
    <property type="generic name" value="Allosamizoline"/>
</dbReference>
<dbReference type="CAZy" id="GH18">
    <property type="family name" value="Glycoside Hydrolase Family 18"/>
</dbReference>
<dbReference type="BioCyc" id="MetaCyc:MONOMER-17691"/>
<dbReference type="BRENDA" id="3.2.1.14">
    <property type="organism ID" value="5690"/>
</dbReference>
<dbReference type="BRENDA" id="3.2.1.201">
    <property type="organism ID" value="5690"/>
</dbReference>
<dbReference type="SABIO-RK" id="P07254"/>
<dbReference type="EvolutionaryTrace" id="P07254"/>
<dbReference type="GO" id="GO:0008061">
    <property type="term" value="F:chitin binding"/>
    <property type="evidence" value="ECO:0007669"/>
    <property type="project" value="InterPro"/>
</dbReference>
<dbReference type="GO" id="GO:0008843">
    <property type="term" value="F:endochitinase activity"/>
    <property type="evidence" value="ECO:0007669"/>
    <property type="project" value="UniProtKB-EC"/>
</dbReference>
<dbReference type="GO" id="GO:0006032">
    <property type="term" value="P:chitin catabolic process"/>
    <property type="evidence" value="ECO:0007669"/>
    <property type="project" value="UniProtKB-KW"/>
</dbReference>
<dbReference type="GO" id="GO:0000272">
    <property type="term" value="P:polysaccharide catabolic process"/>
    <property type="evidence" value="ECO:0007669"/>
    <property type="project" value="UniProtKB-KW"/>
</dbReference>
<dbReference type="CDD" id="cd02848">
    <property type="entry name" value="E_set_Chitinase_N"/>
    <property type="match status" value="1"/>
</dbReference>
<dbReference type="CDD" id="cd06548">
    <property type="entry name" value="GH18_chitinase"/>
    <property type="match status" value="1"/>
</dbReference>
<dbReference type="Gene3D" id="3.10.50.10">
    <property type="match status" value="1"/>
</dbReference>
<dbReference type="Gene3D" id="3.20.20.80">
    <property type="entry name" value="Glycosidases"/>
    <property type="match status" value="1"/>
</dbReference>
<dbReference type="Gene3D" id="2.60.40.10">
    <property type="entry name" value="Immunoglobulins"/>
    <property type="match status" value="1"/>
</dbReference>
<dbReference type="InterPro" id="IPR011583">
    <property type="entry name" value="Chitinase_II/V-like_cat"/>
</dbReference>
<dbReference type="InterPro" id="IPR029070">
    <property type="entry name" value="Chitinase_insertion_sf"/>
</dbReference>
<dbReference type="InterPro" id="IPR013540">
    <property type="entry name" value="ChitinaseA_N"/>
</dbReference>
<dbReference type="InterPro" id="IPR001223">
    <property type="entry name" value="Glyco_hydro18_cat"/>
</dbReference>
<dbReference type="InterPro" id="IPR001579">
    <property type="entry name" value="Glyco_hydro_18_chit_AS"/>
</dbReference>
<dbReference type="InterPro" id="IPR017853">
    <property type="entry name" value="Glycoside_hydrolase_SF"/>
</dbReference>
<dbReference type="InterPro" id="IPR050314">
    <property type="entry name" value="Glycosyl_Hydrlase_18"/>
</dbReference>
<dbReference type="InterPro" id="IPR013783">
    <property type="entry name" value="Ig-like_fold"/>
</dbReference>
<dbReference type="InterPro" id="IPR014756">
    <property type="entry name" value="Ig_E-set"/>
</dbReference>
<dbReference type="InterPro" id="IPR022409">
    <property type="entry name" value="PKD/Chitinase_dom"/>
</dbReference>
<dbReference type="PANTHER" id="PTHR11177">
    <property type="entry name" value="CHITINASE"/>
    <property type="match status" value="1"/>
</dbReference>
<dbReference type="PANTHER" id="PTHR11177:SF317">
    <property type="entry name" value="CHITINASE 12-RELATED"/>
    <property type="match status" value="1"/>
</dbReference>
<dbReference type="Pfam" id="PF08329">
    <property type="entry name" value="ChitinaseA_N"/>
    <property type="match status" value="1"/>
</dbReference>
<dbReference type="Pfam" id="PF00704">
    <property type="entry name" value="Glyco_hydro_18"/>
    <property type="match status" value="1"/>
</dbReference>
<dbReference type="SMART" id="SM00636">
    <property type="entry name" value="Glyco_18"/>
    <property type="match status" value="1"/>
</dbReference>
<dbReference type="SMART" id="SM00089">
    <property type="entry name" value="PKD"/>
    <property type="match status" value="1"/>
</dbReference>
<dbReference type="SUPFAM" id="SSF51445">
    <property type="entry name" value="(Trans)glycosidases"/>
    <property type="match status" value="1"/>
</dbReference>
<dbReference type="SUPFAM" id="SSF54556">
    <property type="entry name" value="Chitinase insertion domain"/>
    <property type="match status" value="1"/>
</dbReference>
<dbReference type="SUPFAM" id="SSF81296">
    <property type="entry name" value="E set domains"/>
    <property type="match status" value="1"/>
</dbReference>
<dbReference type="PROSITE" id="PS01095">
    <property type="entry name" value="GH18_1"/>
    <property type="match status" value="1"/>
</dbReference>
<dbReference type="PROSITE" id="PS51910">
    <property type="entry name" value="GH18_2"/>
    <property type="match status" value="1"/>
</dbReference>
<gene>
    <name type="primary">chiA</name>
</gene>
<sequence>MRKFNKPLLALLIGSTLCSAAQAAAPGKPTIAWGNTKFAIVEVDQAATAYNNLVKVKNAADVSVSWNLWNGDAGTTAKILLNGKEAWSGPSTGSSGTANFKVNKGGRYQMQVALCNADGCTASDATEIVVADTDGSHLAPLKEPLLEKNKPYKQNSGKVVGSYFVEWGVYGRNFTVDKIPAQNLTHLLYGFIPICGGNGINDSLKEIEGSFQALQRSCQGREDFKVSIHDPFAALQKAQKGVTAWDDPYKGNFGQLMALKQAHPDLKILPSIGGWTLSDPFFFMGDKVKRDRFVGSVKEFLQTWKFFDGVDIDWEFPGGKGANPNLGSPQDGETYVLLMKELRAMLDQLSAETGRKYELTSAISAGKDKIDKVAYNVAQNSMDHIFLMSYDFYGPFDLKNLGHQTALNAPAWKPDTAYTTVNGVNALLAQGVKPGKVVVGTAMYGRGWTGVNGYQNNIPFTGTATGPVKGTWKNGIVDYRQIAGQFMSGEWQYTYDATAEAPYVFKPSTGDLITFDDARSVQAKGKYVLDKQLGGLFSWEIDADNGDILNSMNASLGNSAGVQ</sequence>
<keyword id="KW-0002">3D-structure</keyword>
<keyword id="KW-0119">Carbohydrate metabolism</keyword>
<keyword id="KW-0146">Chitin degradation</keyword>
<keyword id="KW-0903">Direct protein sequencing</keyword>
<keyword id="KW-0326">Glycosidase</keyword>
<keyword id="KW-0378">Hydrolase</keyword>
<keyword id="KW-0624">Polysaccharide degradation</keyword>
<keyword id="KW-0732">Signal</keyword>
<name>CHIA_SERMA</name>
<comment type="catalytic activity">
    <reaction>
        <text>Random endo-hydrolysis of N-acetyl-beta-D-glucosaminide (1-&gt;4)-beta-linkages in chitin and chitodextrins.</text>
        <dbReference type="EC" id="3.2.1.14"/>
    </reaction>
</comment>
<comment type="similarity">
    <text evidence="3">Belongs to the glycosyl hydrolase 18 family. Chitinase class II subfamily.</text>
</comment>